<evidence type="ECO:0000255" key="1">
    <source>
        <dbReference type="HAMAP-Rule" id="MF_01280"/>
    </source>
</evidence>
<reference key="1">
    <citation type="submission" date="2009-02" db="EMBL/GenBank/DDBJ databases">
        <title>Genome sequence of Bacillus cereus 03BB102.</title>
        <authorList>
            <person name="Dodson R.J."/>
            <person name="Jackson P."/>
            <person name="Munk A.C."/>
            <person name="Brettin T."/>
            <person name="Bruce D."/>
            <person name="Detter C."/>
            <person name="Tapia R."/>
            <person name="Han C."/>
            <person name="Sutton G."/>
            <person name="Sims D."/>
        </authorList>
    </citation>
    <scope>NUCLEOTIDE SEQUENCE [LARGE SCALE GENOMIC DNA]</scope>
    <source>
        <strain>03BB102</strain>
    </source>
</reference>
<organism>
    <name type="scientific">Bacillus cereus (strain 03BB102)</name>
    <dbReference type="NCBI Taxonomy" id="572264"/>
    <lineage>
        <taxon>Bacteria</taxon>
        <taxon>Bacillati</taxon>
        <taxon>Bacillota</taxon>
        <taxon>Bacilli</taxon>
        <taxon>Bacillales</taxon>
        <taxon>Bacillaceae</taxon>
        <taxon>Bacillus</taxon>
        <taxon>Bacillus cereus group</taxon>
    </lineage>
</organism>
<keyword id="KW-0119">Carbohydrate metabolism</keyword>
<keyword id="KW-1003">Cell membrane</keyword>
<keyword id="KW-0328">Glycosyltransferase</keyword>
<keyword id="KW-0444">Lipid biosynthesis</keyword>
<keyword id="KW-0443">Lipid metabolism</keyword>
<keyword id="KW-0472">Membrane</keyword>
<keyword id="KW-0808">Transferase</keyword>
<sequence>MIKNPKVLILTAHYGNGHVQVAKTLEQTFRQKGIKDVIVCDLFGESHPVITDITKYLYLKSYTIGKELYRLFYYGVEKIYDKKIASWYANFGRKRLKLLLKAEKPDIVINTFPIIAVPELKKQTGISIPVYNVLTDFCVHKIWIHREVDRYFVATDHVKKVMVDIGVPAEQIVETGIPIRSSFELKINPDIIYNKYQLCKNKKILLIVAGAHGVLGSVKELCQSFMSVPDLQVVVVCGKNEALKQDLVGVQDTNPDALKVFGYVENIDELFRVTSCMITKPGGITLSEAAALQVPVILYKPVPGQENENAMYFERKGAAVVIRDDSEVFAKTEALLQDDMKLLQMKEAMKSIYRPEPAGHIVDTILAENHVEPNHIPIKSPALAQSFT</sequence>
<name>UGTP_BACC3</name>
<dbReference type="EC" id="2.4.1.315"/>
<dbReference type="EMBL" id="CP001407">
    <property type="protein sequence ID" value="ACO25954.1"/>
    <property type="molecule type" value="Genomic_DNA"/>
</dbReference>
<dbReference type="RefSeq" id="WP_000594701.1">
    <property type="nucleotide sequence ID" value="NZ_CP009318.1"/>
</dbReference>
<dbReference type="SMR" id="C1EWE6"/>
<dbReference type="CAZy" id="GT28">
    <property type="family name" value="Glycosyltransferase Family 28"/>
</dbReference>
<dbReference type="KEGG" id="bcx:BCA_0530"/>
<dbReference type="PATRIC" id="fig|572264.18.peg.516"/>
<dbReference type="UniPathway" id="UPA00894"/>
<dbReference type="Proteomes" id="UP000002210">
    <property type="component" value="Chromosome"/>
</dbReference>
<dbReference type="GO" id="GO:0005886">
    <property type="term" value="C:plasma membrane"/>
    <property type="evidence" value="ECO:0007669"/>
    <property type="project" value="UniProtKB-SubCell"/>
</dbReference>
<dbReference type="GO" id="GO:0047228">
    <property type="term" value="F:1,2-diacylglycerol 3-glucosyltransferase activity"/>
    <property type="evidence" value="ECO:0007669"/>
    <property type="project" value="UniProtKB-UniRule"/>
</dbReference>
<dbReference type="GO" id="GO:0009246">
    <property type="term" value="P:enterobacterial common antigen biosynthetic process"/>
    <property type="evidence" value="ECO:0007669"/>
    <property type="project" value="UniProtKB-UniPathway"/>
</dbReference>
<dbReference type="GO" id="GO:0009247">
    <property type="term" value="P:glycolipid biosynthetic process"/>
    <property type="evidence" value="ECO:0007669"/>
    <property type="project" value="UniProtKB-UniRule"/>
</dbReference>
<dbReference type="GO" id="GO:0070395">
    <property type="term" value="P:lipoteichoic acid biosynthetic process"/>
    <property type="evidence" value="ECO:0007669"/>
    <property type="project" value="UniProtKB-UniRule"/>
</dbReference>
<dbReference type="CDD" id="cd17507">
    <property type="entry name" value="GT28_Beta-DGS-like"/>
    <property type="match status" value="1"/>
</dbReference>
<dbReference type="Gene3D" id="3.40.50.2000">
    <property type="entry name" value="Glycogen Phosphorylase B"/>
    <property type="match status" value="1"/>
</dbReference>
<dbReference type="HAMAP" id="MF_01280">
    <property type="entry name" value="Diacylglyc_glucosyltr"/>
    <property type="match status" value="1"/>
</dbReference>
<dbReference type="InterPro" id="IPR009695">
    <property type="entry name" value="Diacylglyc_glucosyltr_N"/>
</dbReference>
<dbReference type="InterPro" id="IPR007235">
    <property type="entry name" value="Glyco_trans_28_C"/>
</dbReference>
<dbReference type="InterPro" id="IPR050519">
    <property type="entry name" value="Glycosyltransf_28_UgtP"/>
</dbReference>
<dbReference type="InterPro" id="IPR023589">
    <property type="entry name" value="Pro_diacylglycrl_glcsylTrfase"/>
</dbReference>
<dbReference type="NCBIfam" id="NF010135">
    <property type="entry name" value="PRK13609.1"/>
    <property type="match status" value="1"/>
</dbReference>
<dbReference type="PANTHER" id="PTHR43025">
    <property type="entry name" value="MONOGALACTOSYLDIACYLGLYCEROL SYNTHASE"/>
    <property type="match status" value="1"/>
</dbReference>
<dbReference type="PANTHER" id="PTHR43025:SF3">
    <property type="entry name" value="MONOGALACTOSYLDIACYLGLYCEROL SYNTHASE 1, CHLOROPLASTIC"/>
    <property type="match status" value="1"/>
</dbReference>
<dbReference type="Pfam" id="PF04101">
    <property type="entry name" value="Glyco_tran_28_C"/>
    <property type="match status" value="1"/>
</dbReference>
<dbReference type="Pfam" id="PF06925">
    <property type="entry name" value="MGDG_synth"/>
    <property type="match status" value="1"/>
</dbReference>
<dbReference type="SUPFAM" id="SSF53756">
    <property type="entry name" value="UDP-Glycosyltransferase/glycogen phosphorylase"/>
    <property type="match status" value="1"/>
</dbReference>
<comment type="function">
    <text evidence="1">Processive glucosyltransferase involved in the biosynthesis of both the bilayer- and non-bilayer-forming membrane glucolipids. Is able to successively transfer up to three glucosyl residues to diacylglycerol (DAG), thereby catalyzing the formation of beta-monoglucosyl-DAG (3-O-(beta-D-glucopyranosyl)-1,2-diacyl-sn-glycerol), beta-diglucosyl-DAG (3-O-(beta-D-glucopyranosyl-beta-(1-&gt;6)-D-glucopyranosyl)-1,2-diacyl-sn-glycerol) and beta-triglucosyl-DAG (3-O-(beta-D-glucopyranosyl-beta-(1-&gt;6)-D-glucopyranosyl-beta-(1-&gt;6)-D-glucopyranosyl)-1,2-diacyl-sn-glycerol). Beta-diglucosyl-DAG is the predominant glycolipid found in Bacillales and is also used as a membrane anchor for lipoteichoic acid (LTA).</text>
</comment>
<comment type="catalytic activity">
    <reaction>
        <text>a 1,2-diacyl-3-O-(beta-D-glucopyranosyl)-sn-glycerol + UDP-alpha-D-glucose = a 1,2-diacyl-3-O-(beta-D-Glc-(1-&gt;6)-beta-D-Glc)-sn-glycerol + UDP + H(+)</text>
        <dbReference type="Rhea" id="RHEA:39031"/>
        <dbReference type="ChEBI" id="CHEBI:15378"/>
        <dbReference type="ChEBI" id="CHEBI:58223"/>
        <dbReference type="ChEBI" id="CHEBI:58885"/>
        <dbReference type="ChEBI" id="CHEBI:75799"/>
        <dbReference type="ChEBI" id="CHEBI:76264"/>
        <dbReference type="EC" id="2.4.1.315"/>
    </reaction>
</comment>
<comment type="catalytic activity">
    <reaction>
        <text>a 1,2-diacyl-3-O-(beta-D-Glc-(1-&gt;6)-beta-D-Glc)-sn-glycerol + UDP-alpha-D-glucose = a 1,2-diacyl-3-O-(beta-D-Glc-(1-&gt;6)-beta-D-Glc-(1-&gt;6)-beta-D-Glc)-sn-glycerol + UDP + H(+)</text>
        <dbReference type="Rhea" id="RHEA:39027"/>
        <dbReference type="ChEBI" id="CHEBI:15378"/>
        <dbReference type="ChEBI" id="CHEBI:58223"/>
        <dbReference type="ChEBI" id="CHEBI:58885"/>
        <dbReference type="ChEBI" id="CHEBI:76264"/>
        <dbReference type="ChEBI" id="CHEBI:76265"/>
        <dbReference type="EC" id="2.4.1.315"/>
    </reaction>
</comment>
<comment type="catalytic activity">
    <reaction evidence="1">
        <text>a 1,2-diacyl-sn-glycerol + UDP-alpha-D-glucose = a 1,2-diacyl-3-O-(beta-D-glucopyranosyl)-sn-glycerol + UDP + H(+)</text>
        <dbReference type="Rhea" id="RHEA:17285"/>
        <dbReference type="ChEBI" id="CHEBI:15378"/>
        <dbReference type="ChEBI" id="CHEBI:17815"/>
        <dbReference type="ChEBI" id="CHEBI:58223"/>
        <dbReference type="ChEBI" id="CHEBI:58885"/>
        <dbReference type="ChEBI" id="CHEBI:75799"/>
    </reaction>
</comment>
<comment type="pathway">
    <text evidence="1">Glycolipid metabolism; diglucosyl-diacylglycerol biosynthesis.</text>
</comment>
<comment type="subcellular location">
    <subcellularLocation>
        <location evidence="1">Cell membrane</location>
    </subcellularLocation>
</comment>
<comment type="similarity">
    <text evidence="1">Belongs to the glycosyltransferase 28 family. UgtP subfamily.</text>
</comment>
<proteinExistence type="inferred from homology"/>
<gene>
    <name evidence="1" type="primary">ugtP</name>
    <name type="ordered locus">BCA_0530</name>
</gene>
<accession>C1EWE6</accession>
<protein>
    <recommendedName>
        <fullName evidence="1">Processive diacylglycerol beta-glucosyltransferase</fullName>
        <ecNumber>2.4.1.315</ecNumber>
    </recommendedName>
    <alternativeName>
        <fullName evidence="1">Beta-diglucosyldiacylglycerol synthase</fullName>
        <shortName evidence="1">Beta-DGS</shortName>
        <shortName evidence="1">DGlcDAG synthase</shortName>
        <shortName evidence="1">Glc2-DAG synthase</shortName>
    </alternativeName>
    <alternativeName>
        <fullName evidence="1">Beta-gentiobiosyldiacylglycerol synthase</fullName>
    </alternativeName>
    <alternativeName>
        <fullName evidence="1">Beta-monoglucosyldiacylglycerol synthase</fullName>
        <shortName evidence="1">Beta-MGS</shortName>
        <shortName evidence="1">MGlcDAG synthase</shortName>
    </alternativeName>
    <alternativeName>
        <fullName evidence="1">Beta-triglucosyldiacylglycerol synthase</fullName>
        <shortName evidence="1">TGlcDAG synthase</shortName>
    </alternativeName>
    <alternativeName>
        <fullName>Diglucosyl diacylglycerol synthase (1,6-linking)</fullName>
    </alternativeName>
    <alternativeName>
        <fullName evidence="1">Glucosyl-beta-1,6-glucosyldiacylglycerol synthase</fullName>
    </alternativeName>
    <alternativeName>
        <fullName evidence="1">UDP glucosyltransferase</fullName>
    </alternativeName>
    <alternativeName>
        <fullName evidence="1">UDP-glucose:1,2-diacylglycerol-3-beta-D-glucosyltransferase</fullName>
    </alternativeName>
</protein>
<feature type="chain" id="PRO_1000165233" description="Processive diacylglycerol beta-glucosyltransferase">
    <location>
        <begin position="1"/>
        <end position="388"/>
    </location>
</feature>